<accession>Q02FQ4</accession>
<sequence>MAKQKKHPSGTIAQNKKALHDYFIEQRFEAGVALAGWEVKSLRAGKAQLVDSYVLLKDGEAWLLGSHITPLTTASTHVIADPVRTRKLLLHKRELGKLFGAVQQKGYACVALSMYWKKHLVKCEIALAKGKKDFDKRHTEKERDSDREIQRAMRHGKDD</sequence>
<organism>
    <name type="scientific">Pseudomonas aeruginosa (strain UCBPP-PA14)</name>
    <dbReference type="NCBI Taxonomy" id="208963"/>
    <lineage>
        <taxon>Bacteria</taxon>
        <taxon>Pseudomonadati</taxon>
        <taxon>Pseudomonadota</taxon>
        <taxon>Gammaproteobacteria</taxon>
        <taxon>Pseudomonadales</taxon>
        <taxon>Pseudomonadaceae</taxon>
        <taxon>Pseudomonas</taxon>
    </lineage>
</organism>
<name>SSRP_PSEAB</name>
<reference key="1">
    <citation type="journal article" date="2006" name="Genome Biol.">
        <title>Genomic analysis reveals that Pseudomonas aeruginosa virulence is combinatorial.</title>
        <authorList>
            <person name="Lee D.G."/>
            <person name="Urbach J.M."/>
            <person name="Wu G."/>
            <person name="Liberati N.T."/>
            <person name="Feinbaum R.L."/>
            <person name="Miyata S."/>
            <person name="Diggins L.T."/>
            <person name="He J."/>
            <person name="Saucier M."/>
            <person name="Deziel E."/>
            <person name="Friedman L."/>
            <person name="Li L."/>
            <person name="Grills G."/>
            <person name="Montgomery K."/>
            <person name="Kucherlapati R."/>
            <person name="Rahme L.G."/>
            <person name="Ausubel F.M."/>
        </authorList>
    </citation>
    <scope>NUCLEOTIDE SEQUENCE [LARGE SCALE GENOMIC DNA]</scope>
    <source>
        <strain>UCBPP-PA14</strain>
    </source>
</reference>
<protein>
    <recommendedName>
        <fullName evidence="1">SsrA-binding protein</fullName>
    </recommendedName>
    <alternativeName>
        <fullName evidence="1">Small protein B</fullName>
    </alternativeName>
</protein>
<gene>
    <name evidence="1" type="primary">smpB</name>
    <name type="ordered locus">PA14_63060</name>
</gene>
<comment type="function">
    <text evidence="1">Required for rescue of stalled ribosomes mediated by trans-translation. Binds to transfer-messenger RNA (tmRNA), required for stable association of tmRNA with ribosomes. tmRNA and SmpB together mimic tRNA shape, replacing the anticodon stem-loop with SmpB. tmRNA is encoded by the ssrA gene; the 2 termini fold to resemble tRNA(Ala) and it encodes a 'tag peptide', a short internal open reading frame. During trans-translation Ala-aminoacylated tmRNA acts like a tRNA, entering the A-site of stalled ribosomes, displacing the stalled mRNA. The ribosome then switches to translate the ORF on the tmRNA; the nascent peptide is terminated with the 'tag peptide' encoded by the tmRNA and targeted for degradation. The ribosome is freed to recommence translation, which seems to be the essential function of trans-translation.</text>
</comment>
<comment type="subcellular location">
    <subcellularLocation>
        <location evidence="1">Cytoplasm</location>
    </subcellularLocation>
    <text evidence="1">The tmRNA-SmpB complex associates with stalled 70S ribosomes.</text>
</comment>
<comment type="similarity">
    <text evidence="1">Belongs to the SmpB family.</text>
</comment>
<keyword id="KW-0963">Cytoplasm</keyword>
<keyword id="KW-0694">RNA-binding</keyword>
<proteinExistence type="inferred from homology"/>
<evidence type="ECO:0000255" key="1">
    <source>
        <dbReference type="HAMAP-Rule" id="MF_00023"/>
    </source>
</evidence>
<evidence type="ECO:0000256" key="2">
    <source>
        <dbReference type="SAM" id="MobiDB-lite"/>
    </source>
</evidence>
<dbReference type="EMBL" id="CP000438">
    <property type="protein sequence ID" value="ABJ14151.1"/>
    <property type="molecule type" value="Genomic_DNA"/>
</dbReference>
<dbReference type="RefSeq" id="WP_003100496.1">
    <property type="nucleotide sequence ID" value="NZ_CP034244.1"/>
</dbReference>
<dbReference type="SMR" id="Q02FQ4"/>
<dbReference type="GeneID" id="77223305"/>
<dbReference type="KEGG" id="pau:PA14_63060"/>
<dbReference type="PseudoCAP" id="PA14_63060"/>
<dbReference type="HOGENOM" id="CLU_108953_3_0_6"/>
<dbReference type="BioCyc" id="PAER208963:G1G74-5334-MONOMER"/>
<dbReference type="Proteomes" id="UP000000653">
    <property type="component" value="Chromosome"/>
</dbReference>
<dbReference type="GO" id="GO:0005829">
    <property type="term" value="C:cytosol"/>
    <property type="evidence" value="ECO:0007669"/>
    <property type="project" value="TreeGrafter"/>
</dbReference>
<dbReference type="GO" id="GO:0003723">
    <property type="term" value="F:RNA binding"/>
    <property type="evidence" value="ECO:0007669"/>
    <property type="project" value="UniProtKB-UniRule"/>
</dbReference>
<dbReference type="GO" id="GO:0070929">
    <property type="term" value="P:trans-translation"/>
    <property type="evidence" value="ECO:0007669"/>
    <property type="project" value="UniProtKB-UniRule"/>
</dbReference>
<dbReference type="CDD" id="cd09294">
    <property type="entry name" value="SmpB"/>
    <property type="match status" value="1"/>
</dbReference>
<dbReference type="Gene3D" id="2.40.280.10">
    <property type="match status" value="1"/>
</dbReference>
<dbReference type="HAMAP" id="MF_00023">
    <property type="entry name" value="SmpB"/>
    <property type="match status" value="1"/>
</dbReference>
<dbReference type="InterPro" id="IPR023620">
    <property type="entry name" value="SmpB"/>
</dbReference>
<dbReference type="InterPro" id="IPR000037">
    <property type="entry name" value="SsrA-bd_prot"/>
</dbReference>
<dbReference type="InterPro" id="IPR020081">
    <property type="entry name" value="SsrA-bd_prot_CS"/>
</dbReference>
<dbReference type="NCBIfam" id="NF003843">
    <property type="entry name" value="PRK05422.1"/>
    <property type="match status" value="1"/>
</dbReference>
<dbReference type="NCBIfam" id="TIGR00086">
    <property type="entry name" value="smpB"/>
    <property type="match status" value="1"/>
</dbReference>
<dbReference type="PANTHER" id="PTHR30308:SF2">
    <property type="entry name" value="SSRA-BINDING PROTEIN"/>
    <property type="match status" value="1"/>
</dbReference>
<dbReference type="PANTHER" id="PTHR30308">
    <property type="entry name" value="TMRNA-BINDING COMPONENT OF TRANS-TRANSLATION TAGGING COMPLEX"/>
    <property type="match status" value="1"/>
</dbReference>
<dbReference type="Pfam" id="PF01668">
    <property type="entry name" value="SmpB"/>
    <property type="match status" value="1"/>
</dbReference>
<dbReference type="SUPFAM" id="SSF74982">
    <property type="entry name" value="Small protein B (SmpB)"/>
    <property type="match status" value="1"/>
</dbReference>
<dbReference type="PROSITE" id="PS01317">
    <property type="entry name" value="SSRP"/>
    <property type="match status" value="1"/>
</dbReference>
<feature type="chain" id="PRO_1000002110" description="SsrA-binding protein">
    <location>
        <begin position="1"/>
        <end position="159"/>
    </location>
</feature>
<feature type="region of interest" description="Disordered" evidence="2">
    <location>
        <begin position="132"/>
        <end position="159"/>
    </location>
</feature>